<dbReference type="EMBL" id="HE600949">
    <property type="protein sequence ID" value="CAP34467.2"/>
    <property type="molecule type" value="Genomic_DNA"/>
</dbReference>
<dbReference type="SMR" id="Q612X6"/>
<dbReference type="FunCoup" id="Q612X6">
    <property type="interactions" value="488"/>
</dbReference>
<dbReference type="STRING" id="6238.Q612X6"/>
<dbReference type="EnsemblMetazoa" id="CBG16524.1">
    <property type="protein sequence ID" value="CBG16524.1"/>
    <property type="gene ID" value="WBGene00036437"/>
</dbReference>
<dbReference type="WormBase" id="CBG16524">
    <property type="protein sequence ID" value="CBP37581"/>
    <property type="gene ID" value="WBGene00036437"/>
    <property type="gene designation" value="Cbr-mdt-11"/>
</dbReference>
<dbReference type="eggNOG" id="KOG4057">
    <property type="taxonomic scope" value="Eukaryota"/>
</dbReference>
<dbReference type="HOGENOM" id="CLU_1442300_0_0_1"/>
<dbReference type="InParanoid" id="Q612X6"/>
<dbReference type="OMA" id="QIGKNKM"/>
<dbReference type="Proteomes" id="UP000008549">
    <property type="component" value="Unassembled WGS sequence"/>
</dbReference>
<dbReference type="GO" id="GO:0016592">
    <property type="term" value="C:mediator complex"/>
    <property type="evidence" value="ECO:0000318"/>
    <property type="project" value="GO_Central"/>
</dbReference>
<dbReference type="GO" id="GO:0003712">
    <property type="term" value="F:transcription coregulator activity"/>
    <property type="evidence" value="ECO:0007669"/>
    <property type="project" value="InterPro"/>
</dbReference>
<dbReference type="GO" id="GO:0006357">
    <property type="term" value="P:regulation of transcription by RNA polymerase II"/>
    <property type="evidence" value="ECO:0007669"/>
    <property type="project" value="InterPro"/>
</dbReference>
<dbReference type="FunFam" id="1.10.287.3490:FF:000005">
    <property type="entry name" value="Mediator of RNA polymerase II transcription subunit 11"/>
    <property type="match status" value="1"/>
</dbReference>
<dbReference type="Gene3D" id="1.10.287.3490">
    <property type="match status" value="1"/>
</dbReference>
<dbReference type="InterPro" id="IPR019404">
    <property type="entry name" value="Mediator_Med11"/>
</dbReference>
<dbReference type="PANTHER" id="PTHR22890">
    <property type="entry name" value="MEDIATOR OF RNA POLYMERASE II TRANSCRIPTION SUBUNIT 11"/>
    <property type="match status" value="1"/>
</dbReference>
<dbReference type="Pfam" id="PF10280">
    <property type="entry name" value="Med11"/>
    <property type="match status" value="1"/>
</dbReference>
<gene>
    <name type="primary">mdt-11</name>
    <name type="ORF">CBG16524</name>
</gene>
<evidence type="ECO:0000250" key="1"/>
<evidence type="ECO:0000250" key="2">
    <source>
        <dbReference type="UniProtKB" id="Q99278"/>
    </source>
</evidence>
<evidence type="ECO:0000255" key="3"/>
<evidence type="ECO:0000256" key="4">
    <source>
        <dbReference type="SAM" id="MobiDB-lite"/>
    </source>
</evidence>
<evidence type="ECO:0000305" key="5"/>
<keyword id="KW-0010">Activator</keyword>
<keyword id="KW-0175">Coiled coil</keyword>
<keyword id="KW-0539">Nucleus</keyword>
<keyword id="KW-1185">Reference proteome</keyword>
<keyword id="KW-0804">Transcription</keyword>
<keyword id="KW-0805">Transcription regulation</keyword>
<sequence>MELNPVDSILSDRIQAIVATEKNIDDMMKCAREIMQDLGKEKQISKNKMDDNANSFKKLITQVENELSAQMQYLSHVCVGSSHQGSTFGVLQNSLLAQSGLSSLHSELAQILKNIEPPTQEVDEDNEDEEDSGDADMLEETPEDVVAPRTTSSSATTSDGGSGGADDAASSSAPRSQEERRSTEEEEGEQMEN</sequence>
<name>MED11_CAEBR</name>
<comment type="function">
    <text evidence="2">Component of the Mediator complex, a coactivator involved in the regulated transcription of nearly all RNA polymerase II-dependent genes. Mediator functions as a bridge to convey information from gene-specific regulatory proteins to the basal RNA polymerase II transcription machinery. Mediator is recruited to promoters by direct interactions with regulatory proteins and serves as a scaffold for the assembly of a functional pre-initiation complex with RNA polymerase II and the general transcription factors (By similarity).</text>
</comment>
<comment type="subunit">
    <text evidence="1">Component of the Mediator complex.</text>
</comment>
<comment type="subcellular location">
    <subcellularLocation>
        <location evidence="5">Nucleus</location>
    </subcellularLocation>
</comment>
<comment type="similarity">
    <text evidence="5">Belongs to the Mediator complex subunit 11 family.</text>
</comment>
<organism>
    <name type="scientific">Caenorhabditis briggsae</name>
    <dbReference type="NCBI Taxonomy" id="6238"/>
    <lineage>
        <taxon>Eukaryota</taxon>
        <taxon>Metazoa</taxon>
        <taxon>Ecdysozoa</taxon>
        <taxon>Nematoda</taxon>
        <taxon>Chromadorea</taxon>
        <taxon>Rhabditida</taxon>
        <taxon>Rhabditina</taxon>
        <taxon>Rhabditomorpha</taxon>
        <taxon>Rhabditoidea</taxon>
        <taxon>Rhabditidae</taxon>
        <taxon>Peloderinae</taxon>
        <taxon>Caenorhabditis</taxon>
    </lineage>
</organism>
<proteinExistence type="inferred from homology"/>
<feature type="chain" id="PRO_0000304315" description="Mediator of RNA polymerase II transcription subunit 11">
    <location>
        <begin position="1"/>
        <end position="193"/>
    </location>
</feature>
<feature type="region of interest" description="Disordered" evidence="4">
    <location>
        <begin position="115"/>
        <end position="193"/>
    </location>
</feature>
<feature type="coiled-coil region" evidence="3">
    <location>
        <begin position="31"/>
        <end position="68"/>
    </location>
</feature>
<feature type="compositionally biased region" description="Acidic residues" evidence="4">
    <location>
        <begin position="121"/>
        <end position="143"/>
    </location>
</feature>
<feature type="compositionally biased region" description="Low complexity" evidence="4">
    <location>
        <begin position="150"/>
        <end position="175"/>
    </location>
</feature>
<feature type="compositionally biased region" description="Acidic residues" evidence="4">
    <location>
        <begin position="184"/>
        <end position="193"/>
    </location>
</feature>
<accession>Q612X6</accession>
<accession>A8XPE6</accession>
<reference key="1">
    <citation type="journal article" date="2003" name="PLoS Biol.">
        <title>The genome sequence of Caenorhabditis briggsae: a platform for comparative genomics.</title>
        <authorList>
            <person name="Stein L.D."/>
            <person name="Bao Z."/>
            <person name="Blasiar D."/>
            <person name="Blumenthal T."/>
            <person name="Brent M.R."/>
            <person name="Chen N."/>
            <person name="Chinwalla A."/>
            <person name="Clarke L."/>
            <person name="Clee C."/>
            <person name="Coghlan A."/>
            <person name="Coulson A."/>
            <person name="D'Eustachio P."/>
            <person name="Fitch D.H.A."/>
            <person name="Fulton L.A."/>
            <person name="Fulton R.E."/>
            <person name="Griffiths-Jones S."/>
            <person name="Harris T.W."/>
            <person name="Hillier L.W."/>
            <person name="Kamath R."/>
            <person name="Kuwabara P.E."/>
            <person name="Mardis E.R."/>
            <person name="Marra M.A."/>
            <person name="Miner T.L."/>
            <person name="Minx P."/>
            <person name="Mullikin J.C."/>
            <person name="Plumb R.W."/>
            <person name="Rogers J."/>
            <person name="Schein J.E."/>
            <person name="Sohrmann M."/>
            <person name="Spieth J."/>
            <person name="Stajich J.E."/>
            <person name="Wei C."/>
            <person name="Willey D."/>
            <person name="Wilson R.K."/>
            <person name="Durbin R.M."/>
            <person name="Waterston R.H."/>
        </authorList>
    </citation>
    <scope>NUCLEOTIDE SEQUENCE [LARGE SCALE GENOMIC DNA]</scope>
    <source>
        <strain>AF16</strain>
    </source>
</reference>
<protein>
    <recommendedName>
        <fullName>Mediator of RNA polymerase II transcription subunit 11</fullName>
    </recommendedName>
    <alternativeName>
        <fullName>Mediator complex subunit 11</fullName>
    </alternativeName>
</protein>